<evidence type="ECO:0000255" key="1">
    <source>
        <dbReference type="HAMAP-Rule" id="MF_00600"/>
    </source>
</evidence>
<evidence type="ECO:0000269" key="2">
    <source>
    </source>
</evidence>
<reference key="1">
    <citation type="journal article" date="1993" name="Biochem. Biophys. Res. Commun.">
        <title>Molecular characterization of the gene operon of heat shock proteins HSP60 and HSP10 in methicillin-resistant Staphylococcus aureus.</title>
        <authorList>
            <person name="Ohta T."/>
            <person name="Honda K."/>
            <person name="Kuroda M."/>
            <person name="Saito K."/>
            <person name="Hayashi H."/>
        </authorList>
    </citation>
    <scope>NUCLEOTIDE SEQUENCE [GENOMIC DNA]</scope>
    <scope>PROTEIN SEQUENCE OF 2-21</scope>
    <source>
        <strain>912</strain>
    </source>
</reference>
<proteinExistence type="evidence at protein level"/>
<sequence length="539" mass="57854">MVKQLKFSEDARQAMLRGVDQLANAVKVTIGPKGRNVVLDKEFTAPLITNDGVTIAKEIELEDPYENMGAKLVQEVANKTNEIAGDGTTTATVLAQAMIQEGLKNVTSGANPVGLRQGIDKAVKVAVEALHENSQKVENKNEIAQVGAISAADEEIGRYISEATEKVGNDGVITIITIEESNRLNTELELGMQFDRGYQSPYMVTDSDKMVAELERPYILVTDKKISSFQDILPLLEQVVQSNRPILIVADEVEGDALTNIVLNRMRGTFTAVAVKAPGFGDRRKAMLEDLAILTGAQVITDDLGLDLKDASIDMLGTASKVEVTKDNTTVVDGDGDENSIDARVSQLKSQIEETESDFDREKLQERLAKLAGGVAVIKVGAASETELKERKLRIEDALNSTRAAVEEGIVAGGGTALVNVYQKVSENEAEGDIETGVNIVLKALTAPVRQIAENAGLEGSVIVERLKNAEPGVGFNGATNEWVNMLRRGIVDPTKVTRSALQHAASVAAMFLTTEAVVASIPEKNNDQPNMGGMPGMM</sequence>
<name>CH60_STAAU</name>
<keyword id="KW-0067">ATP-binding</keyword>
<keyword id="KW-0143">Chaperone</keyword>
<keyword id="KW-0963">Cytoplasm</keyword>
<keyword id="KW-0903">Direct protein sequencing</keyword>
<keyword id="KW-0413">Isomerase</keyword>
<keyword id="KW-0547">Nucleotide-binding</keyword>
<keyword id="KW-0346">Stress response</keyword>
<dbReference type="EC" id="5.6.1.7" evidence="1"/>
<dbReference type="EMBL" id="D14711">
    <property type="protein sequence ID" value="BAA03533.1"/>
    <property type="molecule type" value="Genomic_DNA"/>
</dbReference>
<dbReference type="PIR" id="JN0601">
    <property type="entry name" value="JN0601"/>
</dbReference>
<dbReference type="SMR" id="Q08854"/>
<dbReference type="GO" id="GO:0005737">
    <property type="term" value="C:cytoplasm"/>
    <property type="evidence" value="ECO:0007669"/>
    <property type="project" value="UniProtKB-SubCell"/>
</dbReference>
<dbReference type="GO" id="GO:0005524">
    <property type="term" value="F:ATP binding"/>
    <property type="evidence" value="ECO:0007669"/>
    <property type="project" value="UniProtKB-UniRule"/>
</dbReference>
<dbReference type="GO" id="GO:0140662">
    <property type="term" value="F:ATP-dependent protein folding chaperone"/>
    <property type="evidence" value="ECO:0007669"/>
    <property type="project" value="InterPro"/>
</dbReference>
<dbReference type="GO" id="GO:0016853">
    <property type="term" value="F:isomerase activity"/>
    <property type="evidence" value="ECO:0007669"/>
    <property type="project" value="UniProtKB-KW"/>
</dbReference>
<dbReference type="GO" id="GO:0051082">
    <property type="term" value="F:unfolded protein binding"/>
    <property type="evidence" value="ECO:0007669"/>
    <property type="project" value="UniProtKB-UniRule"/>
</dbReference>
<dbReference type="GO" id="GO:0042026">
    <property type="term" value="P:protein refolding"/>
    <property type="evidence" value="ECO:0007669"/>
    <property type="project" value="UniProtKB-UniRule"/>
</dbReference>
<dbReference type="CDD" id="cd03344">
    <property type="entry name" value="GroEL"/>
    <property type="match status" value="1"/>
</dbReference>
<dbReference type="FunFam" id="3.50.7.10:FF:000001">
    <property type="entry name" value="60 kDa chaperonin"/>
    <property type="match status" value="1"/>
</dbReference>
<dbReference type="Gene3D" id="3.50.7.10">
    <property type="entry name" value="GroEL"/>
    <property type="match status" value="1"/>
</dbReference>
<dbReference type="Gene3D" id="1.10.560.10">
    <property type="entry name" value="GroEL-like equatorial domain"/>
    <property type="match status" value="1"/>
</dbReference>
<dbReference type="Gene3D" id="3.30.260.10">
    <property type="entry name" value="TCP-1-like chaperonin intermediate domain"/>
    <property type="match status" value="1"/>
</dbReference>
<dbReference type="HAMAP" id="MF_00600">
    <property type="entry name" value="CH60"/>
    <property type="match status" value="1"/>
</dbReference>
<dbReference type="InterPro" id="IPR018370">
    <property type="entry name" value="Chaperonin_Cpn60_CS"/>
</dbReference>
<dbReference type="InterPro" id="IPR001844">
    <property type="entry name" value="Cpn60/GroEL"/>
</dbReference>
<dbReference type="InterPro" id="IPR002423">
    <property type="entry name" value="Cpn60/GroEL/TCP-1"/>
</dbReference>
<dbReference type="InterPro" id="IPR027409">
    <property type="entry name" value="GroEL-like_apical_dom_sf"/>
</dbReference>
<dbReference type="InterPro" id="IPR027413">
    <property type="entry name" value="GROEL-like_equatorial_sf"/>
</dbReference>
<dbReference type="InterPro" id="IPR027410">
    <property type="entry name" value="TCP-1-like_intermed_sf"/>
</dbReference>
<dbReference type="NCBIfam" id="TIGR02348">
    <property type="entry name" value="GroEL"/>
    <property type="match status" value="1"/>
</dbReference>
<dbReference type="NCBIfam" id="NF000592">
    <property type="entry name" value="PRK00013.1"/>
    <property type="match status" value="1"/>
</dbReference>
<dbReference type="NCBIfam" id="NF009487">
    <property type="entry name" value="PRK12849.1"/>
    <property type="match status" value="1"/>
</dbReference>
<dbReference type="NCBIfam" id="NF009488">
    <property type="entry name" value="PRK12850.1"/>
    <property type="match status" value="1"/>
</dbReference>
<dbReference type="NCBIfam" id="NF009489">
    <property type="entry name" value="PRK12851.1"/>
    <property type="match status" value="1"/>
</dbReference>
<dbReference type="PANTHER" id="PTHR45633">
    <property type="entry name" value="60 KDA HEAT SHOCK PROTEIN, MITOCHONDRIAL"/>
    <property type="match status" value="1"/>
</dbReference>
<dbReference type="Pfam" id="PF00118">
    <property type="entry name" value="Cpn60_TCP1"/>
    <property type="match status" value="1"/>
</dbReference>
<dbReference type="PRINTS" id="PR00298">
    <property type="entry name" value="CHAPERONIN60"/>
</dbReference>
<dbReference type="SUPFAM" id="SSF52029">
    <property type="entry name" value="GroEL apical domain-like"/>
    <property type="match status" value="1"/>
</dbReference>
<dbReference type="SUPFAM" id="SSF48592">
    <property type="entry name" value="GroEL equatorial domain-like"/>
    <property type="match status" value="1"/>
</dbReference>
<dbReference type="SUPFAM" id="SSF54849">
    <property type="entry name" value="GroEL-intermediate domain like"/>
    <property type="match status" value="1"/>
</dbReference>
<dbReference type="PROSITE" id="PS00296">
    <property type="entry name" value="CHAPERONINS_CPN60"/>
    <property type="match status" value="1"/>
</dbReference>
<protein>
    <recommendedName>
        <fullName evidence="1">Chaperonin GroEL</fullName>
        <ecNumber evidence="1">5.6.1.7</ecNumber>
    </recommendedName>
    <alternativeName>
        <fullName evidence="1">60 kDa chaperonin</fullName>
    </alternativeName>
    <alternativeName>
        <fullName evidence="1">Chaperonin-60</fullName>
        <shortName evidence="1">Cpn60</shortName>
    </alternativeName>
</protein>
<gene>
    <name evidence="1" type="primary">groEL</name>
    <name evidence="1" type="synonym">groL</name>
    <name type="synonym">hsp60</name>
    <name type="synonym">mopA</name>
</gene>
<organism>
    <name type="scientific">Staphylococcus aureus</name>
    <dbReference type="NCBI Taxonomy" id="1280"/>
    <lineage>
        <taxon>Bacteria</taxon>
        <taxon>Bacillati</taxon>
        <taxon>Bacillota</taxon>
        <taxon>Bacilli</taxon>
        <taxon>Bacillales</taxon>
        <taxon>Staphylococcaceae</taxon>
        <taxon>Staphylococcus</taxon>
    </lineage>
</organism>
<feature type="initiator methionine" description="Removed" evidence="2">
    <location>
        <position position="1"/>
    </location>
</feature>
<feature type="chain" id="PRO_0000063537" description="Chaperonin GroEL">
    <location>
        <begin position="2"/>
        <end position="539"/>
    </location>
</feature>
<feature type="binding site" evidence="1">
    <location>
        <begin position="29"/>
        <end position="32"/>
    </location>
    <ligand>
        <name>ATP</name>
        <dbReference type="ChEBI" id="CHEBI:30616"/>
    </ligand>
</feature>
<feature type="binding site" evidence="1">
    <location>
        <begin position="86"/>
        <end position="90"/>
    </location>
    <ligand>
        <name>ATP</name>
        <dbReference type="ChEBI" id="CHEBI:30616"/>
    </ligand>
</feature>
<feature type="binding site" evidence="1">
    <location>
        <position position="414"/>
    </location>
    <ligand>
        <name>ATP</name>
        <dbReference type="ChEBI" id="CHEBI:30616"/>
    </ligand>
</feature>
<feature type="binding site" evidence="1">
    <location>
        <position position="493"/>
    </location>
    <ligand>
        <name>ATP</name>
        <dbReference type="ChEBI" id="CHEBI:30616"/>
    </ligand>
</feature>
<comment type="function">
    <text evidence="1">Together with its co-chaperonin GroES, plays an essential role in assisting protein folding. The GroEL-GroES system forms a nano-cage that allows encapsulation of the non-native substrate proteins and provides a physical environment optimized to promote and accelerate protein folding.</text>
</comment>
<comment type="catalytic activity">
    <reaction evidence="1">
        <text>ATP + H2O + a folded polypeptide = ADP + phosphate + an unfolded polypeptide.</text>
        <dbReference type="EC" id="5.6.1.7"/>
    </reaction>
</comment>
<comment type="subunit">
    <text evidence="1">Forms a cylinder of 14 subunits composed of two heptameric rings stacked back-to-back. Interacts with the co-chaperonin GroES.</text>
</comment>
<comment type="subcellular location">
    <subcellularLocation>
        <location evidence="1">Cytoplasm</location>
    </subcellularLocation>
</comment>
<comment type="induction">
    <text>By heat shock.</text>
</comment>
<comment type="similarity">
    <text evidence="1">Belongs to the chaperonin (HSP60) family.</text>
</comment>
<accession>Q08854</accession>